<reference key="1">
    <citation type="journal article" date="1996" name="DNA Res.">
        <title>A 570-kb DNA sequence of the Escherichia coli K-12 genome corresponding to the 28.0-40.1 min region on the linkage map.</title>
        <authorList>
            <person name="Aiba H."/>
            <person name="Baba T."/>
            <person name="Fujita K."/>
            <person name="Hayashi K."/>
            <person name="Inada T."/>
            <person name="Isono K."/>
            <person name="Itoh T."/>
            <person name="Kasai H."/>
            <person name="Kashimoto K."/>
            <person name="Kimura S."/>
            <person name="Kitakawa M."/>
            <person name="Kitagawa M."/>
            <person name="Makino K."/>
            <person name="Miki T."/>
            <person name="Mizobuchi K."/>
            <person name="Mori H."/>
            <person name="Mori T."/>
            <person name="Motomura K."/>
            <person name="Nakade S."/>
            <person name="Nakamura Y."/>
            <person name="Nashimoto H."/>
            <person name="Nishio Y."/>
            <person name="Oshima T."/>
            <person name="Saito N."/>
            <person name="Sampei G."/>
            <person name="Seki Y."/>
            <person name="Sivasundaram S."/>
            <person name="Tagami H."/>
            <person name="Takeda J."/>
            <person name="Takemoto K."/>
            <person name="Takeuchi Y."/>
            <person name="Wada C."/>
            <person name="Yamamoto Y."/>
            <person name="Horiuchi T."/>
        </authorList>
    </citation>
    <scope>NUCLEOTIDE SEQUENCE [LARGE SCALE GENOMIC DNA]</scope>
    <source>
        <strain>K12 / W3110 / ATCC 27325 / DSM 5911</strain>
    </source>
</reference>
<reference key="2">
    <citation type="journal article" date="1997" name="Science">
        <title>The complete genome sequence of Escherichia coli K-12.</title>
        <authorList>
            <person name="Blattner F.R."/>
            <person name="Plunkett G. III"/>
            <person name="Bloch C.A."/>
            <person name="Perna N.T."/>
            <person name="Burland V."/>
            <person name="Riley M."/>
            <person name="Collado-Vides J."/>
            <person name="Glasner J.D."/>
            <person name="Rode C.K."/>
            <person name="Mayhew G.F."/>
            <person name="Gregor J."/>
            <person name="Davis N.W."/>
            <person name="Kirkpatrick H.A."/>
            <person name="Goeden M.A."/>
            <person name="Rose D.J."/>
            <person name="Mau B."/>
            <person name="Shao Y."/>
        </authorList>
    </citation>
    <scope>NUCLEOTIDE SEQUENCE [LARGE SCALE GENOMIC DNA]</scope>
    <source>
        <strain>K12 / MG1655 / ATCC 47076</strain>
    </source>
</reference>
<reference key="3">
    <citation type="journal article" date="2006" name="Mol. Syst. Biol.">
        <title>Highly accurate genome sequences of Escherichia coli K-12 strains MG1655 and W3110.</title>
        <authorList>
            <person name="Hayashi K."/>
            <person name="Morooka N."/>
            <person name="Yamamoto Y."/>
            <person name="Fujita K."/>
            <person name="Isono K."/>
            <person name="Choi S."/>
            <person name="Ohtsubo E."/>
            <person name="Baba T."/>
            <person name="Wanner B.L."/>
            <person name="Mori H."/>
            <person name="Horiuchi T."/>
        </authorList>
    </citation>
    <scope>NUCLEOTIDE SEQUENCE [LARGE SCALE GENOMIC DNA]</scope>
    <source>
        <strain>K12 / W3110 / ATCC 27325 / DSM 5911</strain>
    </source>
</reference>
<reference key="4">
    <citation type="journal article" date="1998" name="J. Bacteriol.">
        <title>Identification and characterization of two quiescent porin genes, nmpC and ompN, in Escherichia coli BE.</title>
        <authorList>
            <person name="Prilipov A."/>
            <person name="Phale P.S."/>
            <person name="Koebnik R."/>
            <person name="Widmer C."/>
            <person name="Rosenbusch J.P."/>
        </authorList>
    </citation>
    <scope>NUCLEOTIDE SEQUENCE [GENOMIC DNA]</scope>
    <scope>PROTEIN SEQUENCE OF 22-33</scope>
    <scope>CHARACTERIZATION</scope>
</reference>
<feature type="signal peptide" evidence="3">
    <location>
        <begin position="1"/>
        <end position="21"/>
    </location>
</feature>
<feature type="chain" id="PRO_0000025250" description="Outer membrane porin N">
    <location>
        <begin position="22"/>
        <end position="377"/>
    </location>
</feature>
<feature type="region of interest" description="Disordered" evidence="2">
    <location>
        <begin position="175"/>
        <end position="196"/>
    </location>
</feature>
<feature type="compositionally biased region" description="Polar residues" evidence="2">
    <location>
        <begin position="175"/>
        <end position="189"/>
    </location>
</feature>
<protein>
    <recommendedName>
        <fullName>Outer membrane porin N</fullName>
    </recommendedName>
    <alternativeName>
        <fullName>Outer membrane protein N</fullName>
    </alternativeName>
    <alternativeName>
        <fullName>Porin OmpN</fullName>
    </alternativeName>
</protein>
<gene>
    <name type="primary">ompN</name>
    <name type="synonym">ynaG</name>
    <name type="ordered locus">b1377</name>
    <name type="ordered locus">JW1371</name>
</gene>
<proteinExistence type="evidence at protein level"/>
<evidence type="ECO:0000250" key="1"/>
<evidence type="ECO:0000256" key="2">
    <source>
        <dbReference type="SAM" id="MobiDB-lite"/>
    </source>
</evidence>
<evidence type="ECO:0000269" key="3">
    <source>
    </source>
</evidence>
<evidence type="ECO:0000305" key="4"/>
<name>OMPN_ECOLI</name>
<organism>
    <name type="scientific">Escherichia coli (strain K12)</name>
    <dbReference type="NCBI Taxonomy" id="83333"/>
    <lineage>
        <taxon>Bacteria</taxon>
        <taxon>Pseudomonadati</taxon>
        <taxon>Pseudomonadota</taxon>
        <taxon>Gammaproteobacteria</taxon>
        <taxon>Enterobacterales</taxon>
        <taxon>Enterobacteriaceae</taxon>
        <taxon>Escherichia</taxon>
    </lineage>
</organism>
<dbReference type="EMBL" id="U00096">
    <property type="protein sequence ID" value="AAC74459.1"/>
    <property type="molecule type" value="Genomic_DNA"/>
</dbReference>
<dbReference type="EMBL" id="AP009048">
    <property type="protein sequence ID" value="BAA14981.1"/>
    <property type="molecule type" value="Genomic_DNA"/>
</dbReference>
<dbReference type="PIR" id="D64888">
    <property type="entry name" value="D64888"/>
</dbReference>
<dbReference type="RefSeq" id="NP_415895.1">
    <property type="nucleotide sequence ID" value="NC_000913.3"/>
</dbReference>
<dbReference type="RefSeq" id="WP_000837921.1">
    <property type="nucleotide sequence ID" value="NZ_SSZK01000012.1"/>
</dbReference>
<dbReference type="SMR" id="P77747"/>
<dbReference type="BioGRID" id="4260172">
    <property type="interactions" value="287"/>
</dbReference>
<dbReference type="DIP" id="DIP-10400N"/>
<dbReference type="FunCoup" id="P77747">
    <property type="interactions" value="249"/>
</dbReference>
<dbReference type="IntAct" id="P77747">
    <property type="interactions" value="2"/>
</dbReference>
<dbReference type="STRING" id="511145.b1377"/>
<dbReference type="TCDB" id="1.B.1.1.21">
    <property type="family name" value="the general bacterial porin (gbp) family"/>
</dbReference>
<dbReference type="PaxDb" id="511145-b1377"/>
<dbReference type="EnsemblBacteria" id="AAC74459">
    <property type="protein sequence ID" value="AAC74459"/>
    <property type="gene ID" value="b1377"/>
</dbReference>
<dbReference type="GeneID" id="946313"/>
<dbReference type="KEGG" id="ecj:JW1371"/>
<dbReference type="KEGG" id="eco:b1377"/>
<dbReference type="KEGG" id="ecoc:C3026_08045"/>
<dbReference type="PATRIC" id="fig|1411691.4.peg.896"/>
<dbReference type="EchoBASE" id="EB3157"/>
<dbReference type="eggNOG" id="COG3203">
    <property type="taxonomic scope" value="Bacteria"/>
</dbReference>
<dbReference type="HOGENOM" id="CLU_058202_0_0_6"/>
<dbReference type="InParanoid" id="P77747"/>
<dbReference type="OMA" id="QADNFMT"/>
<dbReference type="OrthoDB" id="7055111at2"/>
<dbReference type="PhylomeDB" id="P77747"/>
<dbReference type="BioCyc" id="EcoCyc:G6700-MONOMER"/>
<dbReference type="BioCyc" id="MetaCyc:G6700-MONOMER"/>
<dbReference type="PRO" id="PR:P77747"/>
<dbReference type="Proteomes" id="UP000000625">
    <property type="component" value="Chromosome"/>
</dbReference>
<dbReference type="GO" id="GO:0009279">
    <property type="term" value="C:cell outer membrane"/>
    <property type="evidence" value="ECO:0007669"/>
    <property type="project" value="UniProtKB-SubCell"/>
</dbReference>
<dbReference type="GO" id="GO:0016020">
    <property type="term" value="C:membrane"/>
    <property type="evidence" value="ECO:0000314"/>
    <property type="project" value="EcoCyc"/>
</dbReference>
<dbReference type="GO" id="GO:0046930">
    <property type="term" value="C:pore complex"/>
    <property type="evidence" value="ECO:0000318"/>
    <property type="project" value="GO_Central"/>
</dbReference>
<dbReference type="GO" id="GO:0015288">
    <property type="term" value="F:porin activity"/>
    <property type="evidence" value="ECO:0000314"/>
    <property type="project" value="EcoCyc"/>
</dbReference>
<dbReference type="GO" id="GO:0034219">
    <property type="term" value="P:carbohydrate transmembrane transport"/>
    <property type="evidence" value="ECO:0000314"/>
    <property type="project" value="EcoCyc"/>
</dbReference>
<dbReference type="GO" id="GO:0034220">
    <property type="term" value="P:monoatomic ion transmembrane transport"/>
    <property type="evidence" value="ECO:0007669"/>
    <property type="project" value="InterPro"/>
</dbReference>
<dbReference type="CDD" id="cd00342">
    <property type="entry name" value="gram_neg_porins"/>
    <property type="match status" value="1"/>
</dbReference>
<dbReference type="FunFam" id="2.40.160.10:FF:000002">
    <property type="entry name" value="Outer membrane porin F"/>
    <property type="match status" value="1"/>
</dbReference>
<dbReference type="Gene3D" id="2.40.160.10">
    <property type="entry name" value="Porin"/>
    <property type="match status" value="1"/>
</dbReference>
<dbReference type="InterPro" id="IPR050298">
    <property type="entry name" value="Gram-neg_bact_OMP"/>
</dbReference>
<dbReference type="InterPro" id="IPR033900">
    <property type="entry name" value="Gram_neg_porin_domain"/>
</dbReference>
<dbReference type="InterPro" id="IPR023614">
    <property type="entry name" value="Porin_dom_sf"/>
</dbReference>
<dbReference type="InterPro" id="IPR001897">
    <property type="entry name" value="Porin_gammaproteobac"/>
</dbReference>
<dbReference type="InterPro" id="IPR001702">
    <property type="entry name" value="Porin_Gram-ve"/>
</dbReference>
<dbReference type="NCBIfam" id="NF007841">
    <property type="entry name" value="PRK10554.1"/>
    <property type="match status" value="1"/>
</dbReference>
<dbReference type="PANTHER" id="PTHR34501:SF8">
    <property type="entry name" value="OUTER MEMBRANE PORIN N-RELATED"/>
    <property type="match status" value="1"/>
</dbReference>
<dbReference type="PANTHER" id="PTHR34501">
    <property type="entry name" value="PROTEIN YDDL-RELATED"/>
    <property type="match status" value="1"/>
</dbReference>
<dbReference type="Pfam" id="PF00267">
    <property type="entry name" value="Porin_1"/>
    <property type="match status" value="1"/>
</dbReference>
<dbReference type="PRINTS" id="PR00183">
    <property type="entry name" value="ECOLIPORIN"/>
</dbReference>
<dbReference type="PRINTS" id="PR00182">
    <property type="entry name" value="ECOLNEIPORIN"/>
</dbReference>
<dbReference type="SUPFAM" id="SSF56935">
    <property type="entry name" value="Porins"/>
    <property type="match status" value="1"/>
</dbReference>
<keyword id="KW-0998">Cell outer membrane</keyword>
<keyword id="KW-0903">Direct protein sequencing</keyword>
<keyword id="KW-0406">Ion transport</keyword>
<keyword id="KW-0472">Membrane</keyword>
<keyword id="KW-0626">Porin</keyword>
<keyword id="KW-1185">Reference proteome</keyword>
<keyword id="KW-0732">Signal</keyword>
<keyword id="KW-0812">Transmembrane</keyword>
<keyword id="KW-1134">Transmembrane beta strand</keyword>
<keyword id="KW-0813">Transport</keyword>
<accession>P77747</accession>
<accession>P76854</accession>
<comment type="function">
    <text evidence="1">Forms pores that allow passive diffusion of small molecules across the outer membrane (By similarity). Non-specific porin.</text>
</comment>
<comment type="subunit">
    <text>Homotrimer.</text>
</comment>
<comment type="subcellular location">
    <subcellularLocation>
        <location>Cell outer membrane</location>
        <topology>Multi-pass membrane protein</topology>
    </subcellularLocation>
</comment>
<comment type="similarity">
    <text evidence="4">Belongs to the Gram-negative porin family.</text>
</comment>
<sequence>MKSKVLALLIPALLAAGAAHAAEVYNKDGNKLDLYGKVDGLHYFSDNSAKDGDQSYARLGFKGETQINDQLTGYGQWEYNIQANNTESSKNQSWTRLAFAGLKFADYGSFDYGRNYGVMYDIEGWTDMLPEFGGDSYTNADNFMTGRANGVATYRNTDFFGLVNGLNFAVQYQGNNEGASNGQEGTNNGRDVRHENGDGWGLSTTYDLGMGFSAGAAYTSSDRTNDQVNHTAAGGDKADAWTAGLKYDANNIYLATMYSETRNMTPFGDSDYAVANKTQNFEVTAQYQFDFGLRPAVSFLMSKGRDLHAAGGADNPAGVDDKDLVKYADIGATYYFNKNMSTYVDYKINLLDEDDSFYAANGISTDDIVALGLVYQF</sequence>